<comment type="function">
    <text evidence="1">Catalyzes a salvage reaction resulting in the formation of AMP, that is energically less costly than de novo synthesis.</text>
</comment>
<comment type="catalytic activity">
    <reaction evidence="1">
        <text>AMP + diphosphate = 5-phospho-alpha-D-ribose 1-diphosphate + adenine</text>
        <dbReference type="Rhea" id="RHEA:16609"/>
        <dbReference type="ChEBI" id="CHEBI:16708"/>
        <dbReference type="ChEBI" id="CHEBI:33019"/>
        <dbReference type="ChEBI" id="CHEBI:58017"/>
        <dbReference type="ChEBI" id="CHEBI:456215"/>
        <dbReference type="EC" id="2.4.2.7"/>
    </reaction>
</comment>
<comment type="pathway">
    <text evidence="1">Purine metabolism; AMP biosynthesis via salvage pathway; AMP from adenine: step 1/1.</text>
</comment>
<comment type="subunit">
    <text evidence="1">Homodimer.</text>
</comment>
<comment type="subcellular location">
    <subcellularLocation>
        <location evidence="1">Cytoplasm</location>
    </subcellularLocation>
</comment>
<comment type="similarity">
    <text evidence="1">Belongs to the purine/pyrimidine phosphoribosyltransferase family.</text>
</comment>
<evidence type="ECO:0000255" key="1">
    <source>
        <dbReference type="HAMAP-Rule" id="MF_00004"/>
    </source>
</evidence>
<sequence length="179" mass="19833">MNETLKEELLQSIREVKDYPKKGILFKDITTLLNYPKLFNKLIDALKKRYLALNIDFIVGIEARGFILGSALAYALGVGFVPVRKKGKLPAHTLSQSYSLEYGSDSIEIHSDAFRGIKGVRVVLIDDLLATGGTALASLELIKALQAECIEACFLMGLKELPGIQLLEERVKTFCLLEC</sequence>
<proteinExistence type="inferred from homology"/>
<keyword id="KW-0963">Cytoplasm</keyword>
<keyword id="KW-0328">Glycosyltransferase</keyword>
<keyword id="KW-0660">Purine salvage</keyword>
<keyword id="KW-1185">Reference proteome</keyword>
<keyword id="KW-0808">Transferase</keyword>
<organism>
    <name type="scientific">Helicobacter pylori (strain G27)</name>
    <dbReference type="NCBI Taxonomy" id="563041"/>
    <lineage>
        <taxon>Bacteria</taxon>
        <taxon>Pseudomonadati</taxon>
        <taxon>Campylobacterota</taxon>
        <taxon>Epsilonproteobacteria</taxon>
        <taxon>Campylobacterales</taxon>
        <taxon>Helicobacteraceae</taxon>
        <taxon>Helicobacter</taxon>
    </lineage>
</organism>
<accession>B5Z6U3</accession>
<name>APT_HELPG</name>
<reference key="1">
    <citation type="journal article" date="2009" name="J. Bacteriol.">
        <title>The complete genome sequence of Helicobacter pylori strain G27.</title>
        <authorList>
            <person name="Baltrus D.A."/>
            <person name="Amieva M.R."/>
            <person name="Covacci A."/>
            <person name="Lowe T.M."/>
            <person name="Merrell D.S."/>
            <person name="Ottemann K.M."/>
            <person name="Stein M."/>
            <person name="Salama N.R."/>
            <person name="Guillemin K."/>
        </authorList>
    </citation>
    <scope>NUCLEOTIDE SEQUENCE [LARGE SCALE GENOMIC DNA]</scope>
    <source>
        <strain>G27</strain>
    </source>
</reference>
<gene>
    <name evidence="1" type="primary">apt</name>
    <name type="ordered locus">HPG27_531</name>
</gene>
<protein>
    <recommendedName>
        <fullName evidence="1">Adenine phosphoribosyltransferase</fullName>
        <shortName evidence="1">APRT</shortName>
        <ecNumber evidence="1">2.4.2.7</ecNumber>
    </recommendedName>
</protein>
<dbReference type="EC" id="2.4.2.7" evidence="1"/>
<dbReference type="EMBL" id="CP001173">
    <property type="protein sequence ID" value="ACI27292.1"/>
    <property type="molecule type" value="Genomic_DNA"/>
</dbReference>
<dbReference type="RefSeq" id="WP_001006111.1">
    <property type="nucleotide sequence ID" value="NC_011333.1"/>
</dbReference>
<dbReference type="SMR" id="B5Z6U3"/>
<dbReference type="KEGG" id="hpg:HPG27_531"/>
<dbReference type="HOGENOM" id="CLU_063339_3_0_7"/>
<dbReference type="UniPathway" id="UPA00588">
    <property type="reaction ID" value="UER00646"/>
</dbReference>
<dbReference type="Proteomes" id="UP000001735">
    <property type="component" value="Chromosome"/>
</dbReference>
<dbReference type="GO" id="GO:0005737">
    <property type="term" value="C:cytoplasm"/>
    <property type="evidence" value="ECO:0007669"/>
    <property type="project" value="UniProtKB-SubCell"/>
</dbReference>
<dbReference type="GO" id="GO:0002055">
    <property type="term" value="F:adenine binding"/>
    <property type="evidence" value="ECO:0007669"/>
    <property type="project" value="TreeGrafter"/>
</dbReference>
<dbReference type="GO" id="GO:0003999">
    <property type="term" value="F:adenine phosphoribosyltransferase activity"/>
    <property type="evidence" value="ECO:0007669"/>
    <property type="project" value="UniProtKB-UniRule"/>
</dbReference>
<dbReference type="GO" id="GO:0016208">
    <property type="term" value="F:AMP binding"/>
    <property type="evidence" value="ECO:0007669"/>
    <property type="project" value="TreeGrafter"/>
</dbReference>
<dbReference type="GO" id="GO:0006168">
    <property type="term" value="P:adenine salvage"/>
    <property type="evidence" value="ECO:0007669"/>
    <property type="project" value="InterPro"/>
</dbReference>
<dbReference type="GO" id="GO:0044209">
    <property type="term" value="P:AMP salvage"/>
    <property type="evidence" value="ECO:0007669"/>
    <property type="project" value="UniProtKB-UniRule"/>
</dbReference>
<dbReference type="GO" id="GO:0006166">
    <property type="term" value="P:purine ribonucleoside salvage"/>
    <property type="evidence" value="ECO:0007669"/>
    <property type="project" value="UniProtKB-KW"/>
</dbReference>
<dbReference type="CDD" id="cd06223">
    <property type="entry name" value="PRTases_typeI"/>
    <property type="match status" value="1"/>
</dbReference>
<dbReference type="FunFam" id="3.40.50.2020:FF:000021">
    <property type="entry name" value="Adenine phosphoribosyltransferase"/>
    <property type="match status" value="1"/>
</dbReference>
<dbReference type="Gene3D" id="3.40.50.2020">
    <property type="match status" value="1"/>
</dbReference>
<dbReference type="HAMAP" id="MF_00004">
    <property type="entry name" value="Aden_phosphoribosyltr"/>
    <property type="match status" value="1"/>
</dbReference>
<dbReference type="InterPro" id="IPR005764">
    <property type="entry name" value="Ade_phspho_trans"/>
</dbReference>
<dbReference type="InterPro" id="IPR000836">
    <property type="entry name" value="PRibTrfase_dom"/>
</dbReference>
<dbReference type="InterPro" id="IPR029057">
    <property type="entry name" value="PRTase-like"/>
</dbReference>
<dbReference type="InterPro" id="IPR050054">
    <property type="entry name" value="UPRTase/APRTase"/>
</dbReference>
<dbReference type="NCBIfam" id="TIGR01090">
    <property type="entry name" value="apt"/>
    <property type="match status" value="1"/>
</dbReference>
<dbReference type="NCBIfam" id="NF002634">
    <property type="entry name" value="PRK02304.1-3"/>
    <property type="match status" value="1"/>
</dbReference>
<dbReference type="NCBIfam" id="NF002636">
    <property type="entry name" value="PRK02304.1-5"/>
    <property type="match status" value="1"/>
</dbReference>
<dbReference type="PANTHER" id="PTHR32315">
    <property type="entry name" value="ADENINE PHOSPHORIBOSYLTRANSFERASE"/>
    <property type="match status" value="1"/>
</dbReference>
<dbReference type="PANTHER" id="PTHR32315:SF3">
    <property type="entry name" value="ADENINE PHOSPHORIBOSYLTRANSFERASE"/>
    <property type="match status" value="1"/>
</dbReference>
<dbReference type="Pfam" id="PF00156">
    <property type="entry name" value="Pribosyltran"/>
    <property type="match status" value="1"/>
</dbReference>
<dbReference type="SUPFAM" id="SSF53271">
    <property type="entry name" value="PRTase-like"/>
    <property type="match status" value="1"/>
</dbReference>
<dbReference type="PROSITE" id="PS00103">
    <property type="entry name" value="PUR_PYR_PR_TRANSFER"/>
    <property type="match status" value="1"/>
</dbReference>
<feature type="chain" id="PRO_1000088979" description="Adenine phosphoribosyltransferase">
    <location>
        <begin position="1"/>
        <end position="179"/>
    </location>
</feature>